<comment type="function">
    <text evidence="3">Cytochrome P450 monooxygenase; part of the minimal biosynthetic bip cluster that mediates the biosynthesis of bridged polycyclic sesquiterpenoids derived from sativene, isosativene, and longifolene (PubMed:38417166). The sesquiterpene cyclase BipA acts as a versatile cyclase that converts farnesyl diphosphate (FPP) into (-)-sativene as the dominant product and (-)-isosativene and (-)-longifolene as minor ones (PubMed:38417166). The cytochrome P450 monooxygenase BipB then hydroxylates different enantiomeric sesquiterpenes, such as (-)-longifolene and (+)-longifolene, at C-15 and C-14 (PubMed:38417166). The C-15- or both C-15- and C-14-hydroxylated products are further oxidized by unclustered oxidases, resulting in a structurally diverse array of sesquiterpenoids (PubMed:38417166). The BipB-catalyzed hydroxylation at C-15 serves as an initiator for the oxidation by the unclustered oxidases (PubMed:38417166).</text>
</comment>
<comment type="cofactor">
    <cofactor evidence="1">
        <name>heme</name>
        <dbReference type="ChEBI" id="CHEBI:30413"/>
    </cofactor>
</comment>
<comment type="pathway">
    <text evidence="3">Sesquiterpene biosynthesis.</text>
</comment>
<comment type="subcellular location">
    <subcellularLocation>
        <location evidence="2">Membrane</location>
        <topology evidence="2">Single-pass membrane protein</topology>
    </subcellularLocation>
</comment>
<comment type="similarity">
    <text evidence="5">Belongs to the cytochrome P450 family.</text>
</comment>
<dbReference type="EC" id="1.-.-.-" evidence="3"/>
<dbReference type="EMBL" id="WNKQ01000023">
    <property type="protein sequence ID" value="KAF5844377.1"/>
    <property type="molecule type" value="Genomic_DNA"/>
</dbReference>
<dbReference type="SMR" id="A0A8H5Z7T4"/>
<dbReference type="OMA" id="NEMEPMI"/>
<dbReference type="Proteomes" id="UP000624244">
    <property type="component" value="Unassembled WGS sequence"/>
</dbReference>
<dbReference type="GO" id="GO:0016020">
    <property type="term" value="C:membrane"/>
    <property type="evidence" value="ECO:0007669"/>
    <property type="project" value="UniProtKB-SubCell"/>
</dbReference>
<dbReference type="GO" id="GO:0020037">
    <property type="term" value="F:heme binding"/>
    <property type="evidence" value="ECO:0007669"/>
    <property type="project" value="InterPro"/>
</dbReference>
<dbReference type="GO" id="GO:0005506">
    <property type="term" value="F:iron ion binding"/>
    <property type="evidence" value="ECO:0007669"/>
    <property type="project" value="InterPro"/>
</dbReference>
<dbReference type="GO" id="GO:0004497">
    <property type="term" value="F:monooxygenase activity"/>
    <property type="evidence" value="ECO:0007669"/>
    <property type="project" value="UniProtKB-KW"/>
</dbReference>
<dbReference type="GO" id="GO:0016705">
    <property type="term" value="F:oxidoreductase activity, acting on paired donors, with incorporation or reduction of molecular oxygen"/>
    <property type="evidence" value="ECO:0007669"/>
    <property type="project" value="InterPro"/>
</dbReference>
<dbReference type="CDD" id="cd11058">
    <property type="entry name" value="CYP60B-like"/>
    <property type="match status" value="1"/>
</dbReference>
<dbReference type="Gene3D" id="1.10.630.10">
    <property type="entry name" value="Cytochrome P450"/>
    <property type="match status" value="1"/>
</dbReference>
<dbReference type="InterPro" id="IPR001128">
    <property type="entry name" value="Cyt_P450"/>
</dbReference>
<dbReference type="InterPro" id="IPR017972">
    <property type="entry name" value="Cyt_P450_CS"/>
</dbReference>
<dbReference type="InterPro" id="IPR002401">
    <property type="entry name" value="Cyt_P450_E_grp-I"/>
</dbReference>
<dbReference type="InterPro" id="IPR036396">
    <property type="entry name" value="Cyt_P450_sf"/>
</dbReference>
<dbReference type="InterPro" id="IPR050121">
    <property type="entry name" value="Cytochrome_P450_monoxygenase"/>
</dbReference>
<dbReference type="PANTHER" id="PTHR24305">
    <property type="entry name" value="CYTOCHROME P450"/>
    <property type="match status" value="1"/>
</dbReference>
<dbReference type="PANTHER" id="PTHR24305:SF161">
    <property type="entry name" value="P450, PUTATIVE (EUROFUNG)-RELATED"/>
    <property type="match status" value="1"/>
</dbReference>
<dbReference type="Pfam" id="PF00067">
    <property type="entry name" value="p450"/>
    <property type="match status" value="1"/>
</dbReference>
<dbReference type="PRINTS" id="PR00463">
    <property type="entry name" value="EP450I"/>
</dbReference>
<dbReference type="PRINTS" id="PR00385">
    <property type="entry name" value="P450"/>
</dbReference>
<dbReference type="SUPFAM" id="SSF48264">
    <property type="entry name" value="Cytochrome P450"/>
    <property type="match status" value="1"/>
</dbReference>
<dbReference type="PROSITE" id="PS00086">
    <property type="entry name" value="CYTOCHROME_P450"/>
    <property type="match status" value="1"/>
</dbReference>
<organism>
    <name type="scientific">Cochliobolus sativus</name>
    <name type="common">Common root rot and spot blotch fungus</name>
    <name type="synonym">Bipolaris sorokiniana</name>
    <dbReference type="NCBI Taxonomy" id="45130"/>
    <lineage>
        <taxon>Eukaryota</taxon>
        <taxon>Fungi</taxon>
        <taxon>Dikarya</taxon>
        <taxon>Ascomycota</taxon>
        <taxon>Pezizomycotina</taxon>
        <taxon>Dothideomycetes</taxon>
        <taxon>Pleosporomycetidae</taxon>
        <taxon>Pleosporales</taxon>
        <taxon>Pleosporineae</taxon>
        <taxon>Pleosporaceae</taxon>
        <taxon>Bipolaris</taxon>
    </lineage>
</organism>
<evidence type="ECO:0000250" key="1">
    <source>
        <dbReference type="UniProtKB" id="P04798"/>
    </source>
</evidence>
<evidence type="ECO:0000255" key="2"/>
<evidence type="ECO:0000269" key="3">
    <source>
    </source>
</evidence>
<evidence type="ECO:0000303" key="4">
    <source>
    </source>
</evidence>
<evidence type="ECO:0000305" key="5"/>
<proteinExistence type="evidence at protein level"/>
<name>BIPB_COCSA</name>
<accession>A0A8H5Z7T4</accession>
<feature type="chain" id="PRO_0000461293" description="Cytochrome P450 monooxygenase BipB">
    <location>
        <begin position="1"/>
        <end position="508"/>
    </location>
</feature>
<feature type="transmembrane region" description="Helical" evidence="2">
    <location>
        <begin position="11"/>
        <end position="31"/>
    </location>
</feature>
<feature type="binding site" description="axial binding residue" evidence="1">
    <location>
        <position position="448"/>
    </location>
    <ligand>
        <name>heme</name>
        <dbReference type="ChEBI" id="CHEBI:30413"/>
    </ligand>
    <ligandPart>
        <name>Fe</name>
        <dbReference type="ChEBI" id="CHEBI:18248"/>
    </ligandPart>
</feature>
<protein>
    <recommendedName>
        <fullName evidence="4">Cytochrome P450 monooxygenase BipB</fullName>
        <ecNumber evidence="3">1.-.-.-</ecNumber>
    </recommendedName>
    <alternativeName>
        <fullName evidence="4">Minimal biosynthetic bip cluster protein B</fullName>
    </alternativeName>
</protein>
<sequence length="508" mass="57235">MEILNNKTLPELAWLLLGPLVLFYVFKLFIYNVYFHPLRKFPGPWINKISIIPHLYTVFQGKQSYELLKLHRKYGHIVRYGPNELSFSSARAWKDIYGSRPGHQTFVKGTWYDGLSIFAAQDVRSIITERDPTKHAAIARVFGGAFSRSFLNEMEPMINDYIDRFIEHVKTKTANGGVVDLTFGYSSMTFDIIGDLAFGQDFGAIGRETTHPFILELNESLTFTSFHEAIQQFPALGPIARFFFREKVNKLEETARKGGEFALQVMRKRVAEQDTTSRKDFLTKVLEQRASSKVQMSEIQLAAQSWDFIGAGTETTASVMTSTTYYLLRDKKLLAELTAEIRAAFPNADAITNASTEKLELLHRVCLEGLRLPTGAPPILPRLVPKGGDTVDGHFIPGGTPVTIAPMVAALDPLNFKDPLEFKPERWLGKSGDILEASQPFSYGTRGCAGKAIALMEVRVTIAKMLYTFDMELENPDLDWTGNDFNNLLQFGLWVRPLLNVRARLATK</sequence>
<reference key="1">
    <citation type="submission" date="2019-11" db="EMBL/GenBank/DDBJ databases">
        <title>Bipolaris sorokiniana Genome sequencing.</title>
        <authorList>
            <person name="Wang H."/>
        </authorList>
    </citation>
    <scope>NUCLEOTIDE SEQUENCE [LARGE SCALE GENOMIC DNA]</scope>
    <source>
        <strain>(Sacc.) Shoemaker</strain>
    </source>
</reference>
<reference key="2">
    <citation type="journal article" date="2024" name="J. Nat. Prod.">
        <title>Divergent Biosynthesis of Bridged Polycyclic Sesquiterpenoids by a Minimal Fungal Biosynthetic Gene Cluster.</title>
        <authorList>
            <person name="Zhang M.M."/>
            <person name="Long Y."/>
            <person name="Li Y."/>
            <person name="Cui J.J."/>
            <person name="Lv T."/>
            <person name="Luo S."/>
            <person name="Gao K."/>
            <person name="Dong S.H."/>
        </authorList>
    </citation>
    <scope>FUNCTION</scope>
    <scope>CATALYTIC ACTIVITY</scope>
    <scope>PATHWAY</scope>
</reference>
<keyword id="KW-0349">Heme</keyword>
<keyword id="KW-0408">Iron</keyword>
<keyword id="KW-0472">Membrane</keyword>
<keyword id="KW-0479">Metal-binding</keyword>
<keyword id="KW-0503">Monooxygenase</keyword>
<keyword id="KW-0560">Oxidoreductase</keyword>
<keyword id="KW-1185">Reference proteome</keyword>
<keyword id="KW-0812">Transmembrane</keyword>
<keyword id="KW-1133">Transmembrane helix</keyword>